<name>RECF_HAHCH</name>
<keyword id="KW-0067">ATP-binding</keyword>
<keyword id="KW-0963">Cytoplasm</keyword>
<keyword id="KW-0227">DNA damage</keyword>
<keyword id="KW-0234">DNA repair</keyword>
<keyword id="KW-0235">DNA replication</keyword>
<keyword id="KW-0238">DNA-binding</keyword>
<keyword id="KW-0547">Nucleotide-binding</keyword>
<keyword id="KW-1185">Reference proteome</keyword>
<keyword id="KW-0742">SOS response</keyword>
<feature type="chain" id="PRO_0000236122" description="DNA replication and repair protein RecF">
    <location>
        <begin position="1"/>
        <end position="375"/>
    </location>
</feature>
<feature type="binding site" evidence="1">
    <location>
        <begin position="30"/>
        <end position="37"/>
    </location>
    <ligand>
        <name>ATP</name>
        <dbReference type="ChEBI" id="CHEBI:30616"/>
    </ligand>
</feature>
<dbReference type="EMBL" id="CP000155">
    <property type="protein sequence ID" value="ABC26930.1"/>
    <property type="molecule type" value="Genomic_DNA"/>
</dbReference>
<dbReference type="RefSeq" id="WP_011394007.1">
    <property type="nucleotide sequence ID" value="NC_007645.1"/>
</dbReference>
<dbReference type="SMR" id="Q2SQZ4"/>
<dbReference type="STRING" id="349521.HCH_00007"/>
<dbReference type="KEGG" id="hch:HCH_00007"/>
<dbReference type="eggNOG" id="COG1195">
    <property type="taxonomic scope" value="Bacteria"/>
</dbReference>
<dbReference type="HOGENOM" id="CLU_040267_0_0_6"/>
<dbReference type="OrthoDB" id="9803889at2"/>
<dbReference type="Proteomes" id="UP000000238">
    <property type="component" value="Chromosome"/>
</dbReference>
<dbReference type="GO" id="GO:0005737">
    <property type="term" value="C:cytoplasm"/>
    <property type="evidence" value="ECO:0007669"/>
    <property type="project" value="UniProtKB-SubCell"/>
</dbReference>
<dbReference type="GO" id="GO:0005524">
    <property type="term" value="F:ATP binding"/>
    <property type="evidence" value="ECO:0007669"/>
    <property type="project" value="UniProtKB-UniRule"/>
</dbReference>
<dbReference type="GO" id="GO:0003697">
    <property type="term" value="F:single-stranded DNA binding"/>
    <property type="evidence" value="ECO:0007669"/>
    <property type="project" value="UniProtKB-UniRule"/>
</dbReference>
<dbReference type="GO" id="GO:0006260">
    <property type="term" value="P:DNA replication"/>
    <property type="evidence" value="ECO:0007669"/>
    <property type="project" value="UniProtKB-UniRule"/>
</dbReference>
<dbReference type="GO" id="GO:0000731">
    <property type="term" value="P:DNA synthesis involved in DNA repair"/>
    <property type="evidence" value="ECO:0007669"/>
    <property type="project" value="TreeGrafter"/>
</dbReference>
<dbReference type="GO" id="GO:0006302">
    <property type="term" value="P:double-strand break repair"/>
    <property type="evidence" value="ECO:0007669"/>
    <property type="project" value="TreeGrafter"/>
</dbReference>
<dbReference type="GO" id="GO:0009432">
    <property type="term" value="P:SOS response"/>
    <property type="evidence" value="ECO:0007669"/>
    <property type="project" value="UniProtKB-UniRule"/>
</dbReference>
<dbReference type="Gene3D" id="3.40.50.300">
    <property type="entry name" value="P-loop containing nucleotide triphosphate hydrolases"/>
    <property type="match status" value="1"/>
</dbReference>
<dbReference type="Gene3D" id="1.20.1050.90">
    <property type="entry name" value="RecF/RecN/SMC, N-terminal domain"/>
    <property type="match status" value="1"/>
</dbReference>
<dbReference type="HAMAP" id="MF_00365">
    <property type="entry name" value="RecF"/>
    <property type="match status" value="1"/>
</dbReference>
<dbReference type="InterPro" id="IPR001238">
    <property type="entry name" value="DNA-binding_RecF"/>
</dbReference>
<dbReference type="InterPro" id="IPR018078">
    <property type="entry name" value="DNA-binding_RecF_CS"/>
</dbReference>
<dbReference type="InterPro" id="IPR027417">
    <property type="entry name" value="P-loop_NTPase"/>
</dbReference>
<dbReference type="InterPro" id="IPR003395">
    <property type="entry name" value="RecF/RecN/SMC_N"/>
</dbReference>
<dbReference type="InterPro" id="IPR042174">
    <property type="entry name" value="RecF_2"/>
</dbReference>
<dbReference type="NCBIfam" id="TIGR00611">
    <property type="entry name" value="recf"/>
    <property type="match status" value="1"/>
</dbReference>
<dbReference type="PANTHER" id="PTHR32182">
    <property type="entry name" value="DNA REPLICATION AND REPAIR PROTEIN RECF"/>
    <property type="match status" value="1"/>
</dbReference>
<dbReference type="PANTHER" id="PTHR32182:SF0">
    <property type="entry name" value="DNA REPLICATION AND REPAIR PROTEIN RECF"/>
    <property type="match status" value="1"/>
</dbReference>
<dbReference type="Pfam" id="PF02463">
    <property type="entry name" value="SMC_N"/>
    <property type="match status" value="1"/>
</dbReference>
<dbReference type="SUPFAM" id="SSF52540">
    <property type="entry name" value="P-loop containing nucleoside triphosphate hydrolases"/>
    <property type="match status" value="1"/>
</dbReference>
<dbReference type="PROSITE" id="PS00617">
    <property type="entry name" value="RECF_1"/>
    <property type="match status" value="1"/>
</dbReference>
<reference key="1">
    <citation type="journal article" date="2005" name="Nucleic Acids Res.">
        <title>Genomic blueprint of Hahella chejuensis, a marine microbe producing an algicidal agent.</title>
        <authorList>
            <person name="Jeong H."/>
            <person name="Yim J.H."/>
            <person name="Lee C."/>
            <person name="Choi S.-H."/>
            <person name="Park Y.K."/>
            <person name="Yoon S.H."/>
            <person name="Hur C.-G."/>
            <person name="Kang H.-Y."/>
            <person name="Kim D."/>
            <person name="Lee H.H."/>
            <person name="Park K.H."/>
            <person name="Park S.-H."/>
            <person name="Park H.-S."/>
            <person name="Lee H.K."/>
            <person name="Oh T.K."/>
            <person name="Kim J.F."/>
        </authorList>
    </citation>
    <scope>NUCLEOTIDE SEQUENCE [LARGE SCALE GENOMIC DNA]</scope>
    <source>
        <strain>KCTC 2396</strain>
    </source>
</reference>
<protein>
    <recommendedName>
        <fullName evidence="1">DNA replication and repair protein RecF</fullName>
    </recommendedName>
</protein>
<evidence type="ECO:0000255" key="1">
    <source>
        <dbReference type="HAMAP-Rule" id="MF_00365"/>
    </source>
</evidence>
<gene>
    <name evidence="1" type="primary">recF</name>
    <name type="ordered locus">HCH_00007</name>
</gene>
<comment type="function">
    <text evidence="1">The RecF protein is involved in DNA metabolism; it is required for DNA replication and normal SOS inducibility. RecF binds preferentially to single-stranded, linear DNA. It also seems to bind ATP.</text>
</comment>
<comment type="subcellular location">
    <subcellularLocation>
        <location evidence="1">Cytoplasm</location>
    </subcellularLocation>
</comment>
<comment type="similarity">
    <text evidence="1">Belongs to the RecF family.</text>
</comment>
<accession>Q2SQZ4</accession>
<sequence>MGLSRIAFTNLRNISSLKLDTSARLLLFHGNNGSGKSSLLEGVYLLGRGASFRTKELDYAVSHLSDEMVCFGEAVNEDAGKSFRIGVSRQKTGKLTRVRINGESARTLSELAAALPILIVTPDTFGFINGGPGERRRFVDWGVFHVEHQFKVVWQNWRKLLLQRNKLLKSGNISRSELSAWDNQYVAYSDEISRYRDAYFAELKEILIESLKESSEQTRDIGDKLTITLSNGWYQNDVNHMDQLASSVESDVKKGFTTLGPHRADIKVKVGGVHAKEVLSRGQQKTLITHLYLSQLEILRRRTNQRPIVLIDDVGAELDTGNQVTLLTRMLEKGAQVFVTVLDKQQSEYLFGHFNQEYDTQMFHVEQGAVTKVHN</sequence>
<organism>
    <name type="scientific">Hahella chejuensis (strain KCTC 2396)</name>
    <dbReference type="NCBI Taxonomy" id="349521"/>
    <lineage>
        <taxon>Bacteria</taxon>
        <taxon>Pseudomonadati</taxon>
        <taxon>Pseudomonadota</taxon>
        <taxon>Gammaproteobacteria</taxon>
        <taxon>Oceanospirillales</taxon>
        <taxon>Hahellaceae</taxon>
        <taxon>Hahella</taxon>
    </lineage>
</organism>
<proteinExistence type="inferred from homology"/>